<gene>
    <name evidence="1" type="primary">ruvB</name>
    <name type="ordered locus">BRADO1147</name>
</gene>
<reference key="1">
    <citation type="journal article" date="2007" name="Science">
        <title>Legumes symbioses: absence of nod genes in photosynthetic bradyrhizobia.</title>
        <authorList>
            <person name="Giraud E."/>
            <person name="Moulin L."/>
            <person name="Vallenet D."/>
            <person name="Barbe V."/>
            <person name="Cytryn E."/>
            <person name="Avarre J.-C."/>
            <person name="Jaubert M."/>
            <person name="Simon D."/>
            <person name="Cartieaux F."/>
            <person name="Prin Y."/>
            <person name="Bena G."/>
            <person name="Hannibal L."/>
            <person name="Fardoux J."/>
            <person name="Kojadinovic M."/>
            <person name="Vuillet L."/>
            <person name="Lajus A."/>
            <person name="Cruveiller S."/>
            <person name="Rouy Z."/>
            <person name="Mangenot S."/>
            <person name="Segurens B."/>
            <person name="Dossat C."/>
            <person name="Franck W.L."/>
            <person name="Chang W.-S."/>
            <person name="Saunders E."/>
            <person name="Bruce D."/>
            <person name="Richardson P."/>
            <person name="Normand P."/>
            <person name="Dreyfus B."/>
            <person name="Pignol D."/>
            <person name="Stacey G."/>
            <person name="Emerich D."/>
            <person name="Vermeglio A."/>
            <person name="Medigue C."/>
            <person name="Sadowsky M."/>
        </authorList>
    </citation>
    <scope>NUCLEOTIDE SEQUENCE [LARGE SCALE GENOMIC DNA]</scope>
    <source>
        <strain>ORS 278</strain>
    </source>
</reference>
<feature type="chain" id="PRO_0000322788" description="Holliday junction branch migration complex subunit RuvB">
    <location>
        <begin position="1"/>
        <end position="348"/>
    </location>
</feature>
<feature type="region of interest" description="Large ATPase domain (RuvB-L)" evidence="1">
    <location>
        <begin position="1"/>
        <end position="183"/>
    </location>
</feature>
<feature type="region of interest" description="Disordered" evidence="2">
    <location>
        <begin position="1"/>
        <end position="20"/>
    </location>
</feature>
<feature type="region of interest" description="Small ATPAse domain (RuvB-S)" evidence="1">
    <location>
        <begin position="184"/>
        <end position="254"/>
    </location>
</feature>
<feature type="region of interest" description="Head domain (RuvB-H)" evidence="1">
    <location>
        <begin position="257"/>
        <end position="348"/>
    </location>
</feature>
<feature type="binding site" evidence="1">
    <location>
        <position position="22"/>
    </location>
    <ligand>
        <name>ATP</name>
        <dbReference type="ChEBI" id="CHEBI:30616"/>
    </ligand>
</feature>
<feature type="binding site" evidence="1">
    <location>
        <position position="23"/>
    </location>
    <ligand>
        <name>ATP</name>
        <dbReference type="ChEBI" id="CHEBI:30616"/>
    </ligand>
</feature>
<feature type="binding site" evidence="1">
    <location>
        <position position="64"/>
    </location>
    <ligand>
        <name>ATP</name>
        <dbReference type="ChEBI" id="CHEBI:30616"/>
    </ligand>
</feature>
<feature type="binding site" evidence="1">
    <location>
        <position position="67"/>
    </location>
    <ligand>
        <name>ATP</name>
        <dbReference type="ChEBI" id="CHEBI:30616"/>
    </ligand>
</feature>
<feature type="binding site" evidence="1">
    <location>
        <position position="68"/>
    </location>
    <ligand>
        <name>ATP</name>
        <dbReference type="ChEBI" id="CHEBI:30616"/>
    </ligand>
</feature>
<feature type="binding site" evidence="1">
    <location>
        <position position="68"/>
    </location>
    <ligand>
        <name>Mg(2+)</name>
        <dbReference type="ChEBI" id="CHEBI:18420"/>
    </ligand>
</feature>
<feature type="binding site" evidence="1">
    <location>
        <position position="69"/>
    </location>
    <ligand>
        <name>ATP</name>
        <dbReference type="ChEBI" id="CHEBI:30616"/>
    </ligand>
</feature>
<feature type="binding site" evidence="1">
    <location>
        <begin position="130"/>
        <end position="132"/>
    </location>
    <ligand>
        <name>ATP</name>
        <dbReference type="ChEBI" id="CHEBI:30616"/>
    </ligand>
</feature>
<feature type="binding site" evidence="1">
    <location>
        <position position="173"/>
    </location>
    <ligand>
        <name>ATP</name>
        <dbReference type="ChEBI" id="CHEBI:30616"/>
    </ligand>
</feature>
<feature type="binding site" evidence="1">
    <location>
        <position position="183"/>
    </location>
    <ligand>
        <name>ATP</name>
        <dbReference type="ChEBI" id="CHEBI:30616"/>
    </ligand>
</feature>
<feature type="binding site" evidence="1">
    <location>
        <position position="220"/>
    </location>
    <ligand>
        <name>ATP</name>
        <dbReference type="ChEBI" id="CHEBI:30616"/>
    </ligand>
</feature>
<feature type="binding site" evidence="1">
    <location>
        <position position="293"/>
    </location>
    <ligand>
        <name>DNA</name>
        <dbReference type="ChEBI" id="CHEBI:16991"/>
    </ligand>
</feature>
<feature type="binding site" evidence="1">
    <location>
        <position position="312"/>
    </location>
    <ligand>
        <name>DNA</name>
        <dbReference type="ChEBI" id="CHEBI:16991"/>
    </ligand>
</feature>
<feature type="binding site" evidence="1">
    <location>
        <position position="317"/>
    </location>
    <ligand>
        <name>DNA</name>
        <dbReference type="ChEBI" id="CHEBI:16991"/>
    </ligand>
</feature>
<sequence>MKPPARMVSPERRSDDVGDTALRPQQLSEFVGQQQARANLSIFIEAARKRGEALDHVLFVGPPGLGKTTLAQIVARELGVGFRATSGPVIAKAGDLAALLTNLEERDVLFIDEIHRLSPAVEEVLYPAMEDFQLDLIIGEGPAARSVKIDLSKFTLVGATTRAGLLTNPLRDRFGIPIRLNFYTVEELEGIVTRGARVLGIGMTPDGANEIARRARGTPRIAGRLLRRVRDFASAADASAIDRAIADHALSALEVDAAGLDAMDRRYLSTIALNYGGGPVGVETMAAALSEPRDAIEDIIEPYLIQCGYLQRTPRGRLLTSHAFKHLGMAEPANRDPSQIGLFGNDDD</sequence>
<protein>
    <recommendedName>
        <fullName evidence="1">Holliday junction branch migration complex subunit RuvB</fullName>
        <ecNumber evidence="1">3.6.4.-</ecNumber>
    </recommendedName>
</protein>
<accession>A4YMC8</accession>
<comment type="function">
    <text evidence="1">The RuvA-RuvB-RuvC complex processes Holliday junction (HJ) DNA during genetic recombination and DNA repair, while the RuvA-RuvB complex plays an important role in the rescue of blocked DNA replication forks via replication fork reversal (RFR). RuvA specifically binds to HJ cruciform DNA, conferring on it an open structure. The RuvB hexamer acts as an ATP-dependent pump, pulling dsDNA into and through the RuvAB complex. RuvB forms 2 homohexamers on either side of HJ DNA bound by 1 or 2 RuvA tetramers; 4 subunits per hexamer contact DNA at a time. Coordinated motions by a converter formed by DNA-disengaged RuvB subunits stimulates ATP hydrolysis and nucleotide exchange. Immobilization of the converter enables RuvB to convert the ATP-contained energy into a lever motion, pulling 2 nucleotides of DNA out of the RuvA tetramer per ATP hydrolyzed, thus driving DNA branch migration. The RuvB motors rotate together with the DNA substrate, which together with the progressing nucleotide cycle form the mechanistic basis for DNA recombination by continuous HJ branch migration. Branch migration allows RuvC to scan DNA until it finds its consensus sequence, where it cleaves and resolves cruciform DNA.</text>
</comment>
<comment type="catalytic activity">
    <reaction evidence="1">
        <text>ATP + H2O = ADP + phosphate + H(+)</text>
        <dbReference type="Rhea" id="RHEA:13065"/>
        <dbReference type="ChEBI" id="CHEBI:15377"/>
        <dbReference type="ChEBI" id="CHEBI:15378"/>
        <dbReference type="ChEBI" id="CHEBI:30616"/>
        <dbReference type="ChEBI" id="CHEBI:43474"/>
        <dbReference type="ChEBI" id="CHEBI:456216"/>
    </reaction>
</comment>
<comment type="subunit">
    <text evidence="1">Homohexamer. Forms an RuvA(8)-RuvB(12)-Holliday junction (HJ) complex. HJ DNA is sandwiched between 2 RuvA tetramers; dsDNA enters through RuvA and exits via RuvB. An RuvB hexamer assembles on each DNA strand where it exits the tetramer. Each RuvB hexamer is contacted by two RuvA subunits (via domain III) on 2 adjacent RuvB subunits; this complex drives branch migration. In the full resolvosome a probable DNA-RuvA(4)-RuvB(12)-RuvC(2) complex forms which resolves the HJ.</text>
</comment>
<comment type="subcellular location">
    <subcellularLocation>
        <location evidence="1">Cytoplasm</location>
    </subcellularLocation>
</comment>
<comment type="domain">
    <text evidence="1">Has 3 domains, the large (RuvB-L) and small ATPase (RuvB-S) domains and the C-terminal head (RuvB-H) domain. The head domain binds DNA, while the ATPase domains jointly bind ATP, ADP or are empty depending on the state of the subunit in the translocation cycle. During a single DNA translocation step the structure of each domain remains the same, but their relative positions change.</text>
</comment>
<comment type="similarity">
    <text evidence="1">Belongs to the RuvB family.</text>
</comment>
<dbReference type="EC" id="3.6.4.-" evidence="1"/>
<dbReference type="EMBL" id="CU234118">
    <property type="protein sequence ID" value="CAL75054.1"/>
    <property type="molecule type" value="Genomic_DNA"/>
</dbReference>
<dbReference type="RefSeq" id="WP_011924298.1">
    <property type="nucleotide sequence ID" value="NC_009445.1"/>
</dbReference>
<dbReference type="SMR" id="A4YMC8"/>
<dbReference type="STRING" id="114615.BRADO1147"/>
<dbReference type="KEGG" id="bra:BRADO1147"/>
<dbReference type="eggNOG" id="COG2255">
    <property type="taxonomic scope" value="Bacteria"/>
</dbReference>
<dbReference type="HOGENOM" id="CLU_055599_1_0_5"/>
<dbReference type="OrthoDB" id="9804478at2"/>
<dbReference type="Proteomes" id="UP000001994">
    <property type="component" value="Chromosome"/>
</dbReference>
<dbReference type="GO" id="GO:0005737">
    <property type="term" value="C:cytoplasm"/>
    <property type="evidence" value="ECO:0007669"/>
    <property type="project" value="UniProtKB-SubCell"/>
</dbReference>
<dbReference type="GO" id="GO:0048476">
    <property type="term" value="C:Holliday junction resolvase complex"/>
    <property type="evidence" value="ECO:0007669"/>
    <property type="project" value="UniProtKB-UniRule"/>
</dbReference>
<dbReference type="GO" id="GO:0005524">
    <property type="term" value="F:ATP binding"/>
    <property type="evidence" value="ECO:0007669"/>
    <property type="project" value="UniProtKB-UniRule"/>
</dbReference>
<dbReference type="GO" id="GO:0016887">
    <property type="term" value="F:ATP hydrolysis activity"/>
    <property type="evidence" value="ECO:0007669"/>
    <property type="project" value="InterPro"/>
</dbReference>
<dbReference type="GO" id="GO:0000400">
    <property type="term" value="F:four-way junction DNA binding"/>
    <property type="evidence" value="ECO:0007669"/>
    <property type="project" value="UniProtKB-UniRule"/>
</dbReference>
<dbReference type="GO" id="GO:0009378">
    <property type="term" value="F:four-way junction helicase activity"/>
    <property type="evidence" value="ECO:0007669"/>
    <property type="project" value="InterPro"/>
</dbReference>
<dbReference type="GO" id="GO:0006310">
    <property type="term" value="P:DNA recombination"/>
    <property type="evidence" value="ECO:0007669"/>
    <property type="project" value="UniProtKB-UniRule"/>
</dbReference>
<dbReference type="GO" id="GO:0006281">
    <property type="term" value="P:DNA repair"/>
    <property type="evidence" value="ECO:0007669"/>
    <property type="project" value="UniProtKB-UniRule"/>
</dbReference>
<dbReference type="CDD" id="cd00009">
    <property type="entry name" value="AAA"/>
    <property type="match status" value="1"/>
</dbReference>
<dbReference type="FunFam" id="3.40.50.300:FF:000073">
    <property type="entry name" value="Holliday junction ATP-dependent DNA helicase RuvB"/>
    <property type="match status" value="1"/>
</dbReference>
<dbReference type="Gene3D" id="1.10.8.60">
    <property type="match status" value="1"/>
</dbReference>
<dbReference type="Gene3D" id="3.40.50.300">
    <property type="entry name" value="P-loop containing nucleotide triphosphate hydrolases"/>
    <property type="match status" value="1"/>
</dbReference>
<dbReference type="Gene3D" id="1.10.10.10">
    <property type="entry name" value="Winged helix-like DNA-binding domain superfamily/Winged helix DNA-binding domain"/>
    <property type="match status" value="1"/>
</dbReference>
<dbReference type="HAMAP" id="MF_00016">
    <property type="entry name" value="DNA_HJ_migration_RuvB"/>
    <property type="match status" value="1"/>
</dbReference>
<dbReference type="InterPro" id="IPR003593">
    <property type="entry name" value="AAA+_ATPase"/>
</dbReference>
<dbReference type="InterPro" id="IPR041445">
    <property type="entry name" value="AAA_lid_4"/>
</dbReference>
<dbReference type="InterPro" id="IPR004605">
    <property type="entry name" value="DNA_helicase_Holl-junc_RuvB"/>
</dbReference>
<dbReference type="InterPro" id="IPR027417">
    <property type="entry name" value="P-loop_NTPase"/>
</dbReference>
<dbReference type="InterPro" id="IPR008824">
    <property type="entry name" value="RuvB-like_N"/>
</dbReference>
<dbReference type="InterPro" id="IPR008823">
    <property type="entry name" value="RuvB_C"/>
</dbReference>
<dbReference type="InterPro" id="IPR036388">
    <property type="entry name" value="WH-like_DNA-bd_sf"/>
</dbReference>
<dbReference type="InterPro" id="IPR036390">
    <property type="entry name" value="WH_DNA-bd_sf"/>
</dbReference>
<dbReference type="NCBIfam" id="NF000868">
    <property type="entry name" value="PRK00080.1"/>
    <property type="match status" value="1"/>
</dbReference>
<dbReference type="NCBIfam" id="TIGR00635">
    <property type="entry name" value="ruvB"/>
    <property type="match status" value="1"/>
</dbReference>
<dbReference type="PANTHER" id="PTHR42848">
    <property type="match status" value="1"/>
</dbReference>
<dbReference type="PANTHER" id="PTHR42848:SF1">
    <property type="entry name" value="HOLLIDAY JUNCTION BRANCH MIGRATION COMPLEX SUBUNIT RUVB"/>
    <property type="match status" value="1"/>
</dbReference>
<dbReference type="Pfam" id="PF17864">
    <property type="entry name" value="AAA_lid_4"/>
    <property type="match status" value="1"/>
</dbReference>
<dbReference type="Pfam" id="PF05491">
    <property type="entry name" value="RuvB_C"/>
    <property type="match status" value="1"/>
</dbReference>
<dbReference type="Pfam" id="PF05496">
    <property type="entry name" value="RuvB_N"/>
    <property type="match status" value="1"/>
</dbReference>
<dbReference type="SMART" id="SM00382">
    <property type="entry name" value="AAA"/>
    <property type="match status" value="1"/>
</dbReference>
<dbReference type="SUPFAM" id="SSF52540">
    <property type="entry name" value="P-loop containing nucleoside triphosphate hydrolases"/>
    <property type="match status" value="1"/>
</dbReference>
<dbReference type="SUPFAM" id="SSF46785">
    <property type="entry name" value="Winged helix' DNA-binding domain"/>
    <property type="match status" value="1"/>
</dbReference>
<name>RUVB_BRASO</name>
<proteinExistence type="inferred from homology"/>
<keyword id="KW-0067">ATP-binding</keyword>
<keyword id="KW-0963">Cytoplasm</keyword>
<keyword id="KW-0227">DNA damage</keyword>
<keyword id="KW-0233">DNA recombination</keyword>
<keyword id="KW-0234">DNA repair</keyword>
<keyword id="KW-0238">DNA-binding</keyword>
<keyword id="KW-0378">Hydrolase</keyword>
<keyword id="KW-0547">Nucleotide-binding</keyword>
<keyword id="KW-1185">Reference proteome</keyword>
<evidence type="ECO:0000255" key="1">
    <source>
        <dbReference type="HAMAP-Rule" id="MF_00016"/>
    </source>
</evidence>
<evidence type="ECO:0000256" key="2">
    <source>
        <dbReference type="SAM" id="MobiDB-lite"/>
    </source>
</evidence>
<organism>
    <name type="scientific">Bradyrhizobium sp. (strain ORS 278)</name>
    <dbReference type="NCBI Taxonomy" id="114615"/>
    <lineage>
        <taxon>Bacteria</taxon>
        <taxon>Pseudomonadati</taxon>
        <taxon>Pseudomonadota</taxon>
        <taxon>Alphaproteobacteria</taxon>
        <taxon>Hyphomicrobiales</taxon>
        <taxon>Nitrobacteraceae</taxon>
        <taxon>Bradyrhizobium</taxon>
    </lineage>
</organism>